<feature type="chain" id="PRO_1000059221" description="Bifunctional uridylyltransferase/uridylyl-removing enzyme">
    <location>
        <begin position="1"/>
        <end position="890"/>
    </location>
</feature>
<feature type="domain" description="HD" evidence="2">
    <location>
        <begin position="468"/>
        <end position="590"/>
    </location>
</feature>
<feature type="domain" description="ACT 1" evidence="1">
    <location>
        <begin position="709"/>
        <end position="789"/>
    </location>
</feature>
<feature type="domain" description="ACT 2" evidence="1">
    <location>
        <begin position="816"/>
        <end position="890"/>
    </location>
</feature>
<feature type="region of interest" description="Uridylyltransferase">
    <location>
        <begin position="1"/>
        <end position="349"/>
    </location>
</feature>
<feature type="region of interest" description="Uridylyl-removing">
    <location>
        <begin position="350"/>
        <end position="708"/>
    </location>
</feature>
<accession>A7ZHQ7</accession>
<sequence length="890" mass="102354">MNTLPEQYANTALPTLPGQPQNPCVWPRDELTVGGIKAHIDTFQRWLGDAFDNGISAEQLIEARTEFIDQLLQRLWIEAGFSQIADLALVAGGGYGRGELHPLSDIDLLILSRKKLPDDQAQKVGELLTLLWDVKLEVGHSVRTLEECMLEGLSDLTVATNLIESRLLIGDVALFLELQKHIFSEGFWPSDKFYAAKVEEQNQRHQRYHGTSYNLEPDIKSSPGGLRDIHTLQWVARRHFGATSLDEMVGFGFLTSAERAELNECLHILWRIRFALHLVVSRYDNRLLFDRQLSVAQRLNYSGEGNEPVERMMKDYFRVTRRVSELNQMLLQLFDEAILALPADEKPRPIDDEFQLRGTLIDLRDETLFMRQPEAILRMFYTMVRNSAITGIYSTTLRQLRHARRHLQQPLCNIPEARKLFLSILRHPGAVRRGLLPMHRHSVLGAYMPQWSHIVGQMQFDLFHAYTVDEHTIRVMLKLESFASEETRQRHPLCVDVWPRLPSTELIFIAALFHDIAKGRGGDHSILGAQDVVHFAELHGLNSRETQLVAWLVRQHLLMSVTAQRRDIQDPEVIKQFAEEVQTENRLRYLVCLTVADICATNETLWNSWKQSLLRELYFATEKQLRRGMQNTPDMRERVRHHQLQALALLRMDNIDEEALHQIWSRCRANYFVRHSPNQLAWHARHLLQHDLSKPLVLLSPQATRGGTEIFIWSPDRPYLFAAVCAELDRRNLSVHDAQIFTTRDGMAMDTFIVLEPDGSPLSADRHEVIRFGLEQVLTQSSWQPPQPRRQPAKLRHFTVETEVTFLPTHTDRKSFLELIALDQPGLLARVGKIFADLGISLHGARITTIGERVEDLFIIATADRRALNNELQQEVHQRLTEALNPNDKG</sequence>
<protein>
    <recommendedName>
        <fullName evidence="1">Bifunctional uridylyltransferase/uridylyl-removing enzyme</fullName>
        <shortName evidence="1">UTase/UR</shortName>
    </recommendedName>
    <alternativeName>
        <fullName evidence="1">Bifunctional [protein-PII] modification enzyme</fullName>
    </alternativeName>
    <alternativeName>
        <fullName evidence="1">Bifunctional nitrogen sensor protein</fullName>
    </alternativeName>
    <domain>
        <recommendedName>
            <fullName evidence="1">[Protein-PII] uridylyltransferase</fullName>
            <shortName evidence="1">PII uridylyltransferase</shortName>
            <shortName evidence="1">UTase</shortName>
            <ecNumber evidence="1">2.7.7.59</ecNumber>
        </recommendedName>
    </domain>
    <domain>
        <recommendedName>
            <fullName evidence="1">[Protein-PII]-UMP uridylyl-removing enzyme</fullName>
            <shortName evidence="1">UR</shortName>
            <ecNumber evidence="1">3.1.4.-</ecNumber>
        </recommendedName>
    </domain>
</protein>
<reference key="1">
    <citation type="journal article" date="2008" name="J. Bacteriol.">
        <title>The pangenome structure of Escherichia coli: comparative genomic analysis of E. coli commensal and pathogenic isolates.</title>
        <authorList>
            <person name="Rasko D.A."/>
            <person name="Rosovitz M.J."/>
            <person name="Myers G.S.A."/>
            <person name="Mongodin E.F."/>
            <person name="Fricke W.F."/>
            <person name="Gajer P."/>
            <person name="Crabtree J."/>
            <person name="Sebaihia M."/>
            <person name="Thomson N.R."/>
            <person name="Chaudhuri R."/>
            <person name="Henderson I.R."/>
            <person name="Sperandio V."/>
            <person name="Ravel J."/>
        </authorList>
    </citation>
    <scope>NUCLEOTIDE SEQUENCE [LARGE SCALE GENOMIC DNA]</scope>
    <source>
        <strain>E24377A / ETEC</strain>
    </source>
</reference>
<dbReference type="EC" id="2.7.7.59" evidence="1"/>
<dbReference type="EC" id="3.1.4.-" evidence="1"/>
<dbReference type="EMBL" id="CP000800">
    <property type="protein sequence ID" value="ABV19536.1"/>
    <property type="molecule type" value="Genomic_DNA"/>
</dbReference>
<dbReference type="RefSeq" id="WP_001094564.1">
    <property type="nucleotide sequence ID" value="NC_009801.1"/>
</dbReference>
<dbReference type="SMR" id="A7ZHQ7"/>
<dbReference type="KEGG" id="ecw:EcE24377A_0170"/>
<dbReference type="HOGENOM" id="CLU_012833_0_0_6"/>
<dbReference type="Proteomes" id="UP000001122">
    <property type="component" value="Chromosome"/>
</dbReference>
<dbReference type="GO" id="GO:0008773">
    <property type="term" value="F:[protein-PII] uridylyltransferase activity"/>
    <property type="evidence" value="ECO:0007669"/>
    <property type="project" value="UniProtKB-UniRule"/>
</dbReference>
<dbReference type="GO" id="GO:0008081">
    <property type="term" value="F:phosphoric diester hydrolase activity"/>
    <property type="evidence" value="ECO:0007669"/>
    <property type="project" value="UniProtKB-UniRule"/>
</dbReference>
<dbReference type="GO" id="GO:0006808">
    <property type="term" value="P:regulation of nitrogen utilization"/>
    <property type="evidence" value="ECO:0007669"/>
    <property type="project" value="UniProtKB-UniRule"/>
</dbReference>
<dbReference type="CDD" id="cd04899">
    <property type="entry name" value="ACT_ACR-UUR-like_2"/>
    <property type="match status" value="1"/>
</dbReference>
<dbReference type="CDD" id="cd04900">
    <property type="entry name" value="ACT_UUR-like_1"/>
    <property type="match status" value="1"/>
</dbReference>
<dbReference type="CDD" id="cd00077">
    <property type="entry name" value="HDc"/>
    <property type="match status" value="1"/>
</dbReference>
<dbReference type="CDD" id="cd05401">
    <property type="entry name" value="NT_GlnE_GlnD_like"/>
    <property type="match status" value="1"/>
</dbReference>
<dbReference type="FunFam" id="1.10.3210.10:FF:000005">
    <property type="entry name" value="Bifunctional uridylyltransferase/uridylyl-removing enzyme"/>
    <property type="match status" value="1"/>
</dbReference>
<dbReference type="Gene3D" id="1.10.3210.10">
    <property type="entry name" value="Hypothetical protein af1432"/>
    <property type="match status" value="1"/>
</dbReference>
<dbReference type="HAMAP" id="MF_00277">
    <property type="entry name" value="PII_uridylyl_transf"/>
    <property type="match status" value="1"/>
</dbReference>
<dbReference type="InterPro" id="IPR045865">
    <property type="entry name" value="ACT-like_dom_sf"/>
</dbReference>
<dbReference type="InterPro" id="IPR002912">
    <property type="entry name" value="ACT_dom"/>
</dbReference>
<dbReference type="InterPro" id="IPR003607">
    <property type="entry name" value="HD/PDEase_dom"/>
</dbReference>
<dbReference type="InterPro" id="IPR006674">
    <property type="entry name" value="HD_domain"/>
</dbReference>
<dbReference type="InterPro" id="IPR043519">
    <property type="entry name" value="NT_sf"/>
</dbReference>
<dbReference type="InterPro" id="IPR013546">
    <property type="entry name" value="PII_UdlTrfase/GS_AdlTrfase"/>
</dbReference>
<dbReference type="InterPro" id="IPR002934">
    <property type="entry name" value="Polymerase_NTP_transf_dom"/>
</dbReference>
<dbReference type="InterPro" id="IPR010043">
    <property type="entry name" value="UTase/UR"/>
</dbReference>
<dbReference type="NCBIfam" id="NF002487">
    <property type="entry name" value="PRK01759.1"/>
    <property type="match status" value="1"/>
</dbReference>
<dbReference type="NCBIfam" id="NF003448">
    <property type="entry name" value="PRK05007.1"/>
    <property type="match status" value="1"/>
</dbReference>
<dbReference type="NCBIfam" id="TIGR01693">
    <property type="entry name" value="UTase_glnD"/>
    <property type="match status" value="1"/>
</dbReference>
<dbReference type="PANTHER" id="PTHR47320">
    <property type="entry name" value="BIFUNCTIONAL URIDYLYLTRANSFERASE/URIDYLYL-REMOVING ENZYME"/>
    <property type="match status" value="1"/>
</dbReference>
<dbReference type="PANTHER" id="PTHR47320:SF1">
    <property type="entry name" value="BIFUNCTIONAL URIDYLYLTRANSFERASE_URIDYLYL-REMOVING ENZYME"/>
    <property type="match status" value="1"/>
</dbReference>
<dbReference type="Pfam" id="PF01842">
    <property type="entry name" value="ACT"/>
    <property type="match status" value="2"/>
</dbReference>
<dbReference type="Pfam" id="PF08335">
    <property type="entry name" value="GlnD_UR_UTase"/>
    <property type="match status" value="1"/>
</dbReference>
<dbReference type="Pfam" id="PF01966">
    <property type="entry name" value="HD"/>
    <property type="match status" value="1"/>
</dbReference>
<dbReference type="Pfam" id="PF01909">
    <property type="entry name" value="NTP_transf_2"/>
    <property type="match status" value="1"/>
</dbReference>
<dbReference type="PIRSF" id="PIRSF006288">
    <property type="entry name" value="PII_uridyltransf"/>
    <property type="match status" value="1"/>
</dbReference>
<dbReference type="SMART" id="SM00471">
    <property type="entry name" value="HDc"/>
    <property type="match status" value="1"/>
</dbReference>
<dbReference type="SUPFAM" id="SSF55021">
    <property type="entry name" value="ACT-like"/>
    <property type="match status" value="2"/>
</dbReference>
<dbReference type="SUPFAM" id="SSF109604">
    <property type="entry name" value="HD-domain/PDEase-like"/>
    <property type="match status" value="1"/>
</dbReference>
<dbReference type="SUPFAM" id="SSF81301">
    <property type="entry name" value="Nucleotidyltransferase"/>
    <property type="match status" value="1"/>
</dbReference>
<dbReference type="SUPFAM" id="SSF81593">
    <property type="entry name" value="Nucleotidyltransferase substrate binding subunit/domain"/>
    <property type="match status" value="1"/>
</dbReference>
<dbReference type="PROSITE" id="PS51671">
    <property type="entry name" value="ACT"/>
    <property type="match status" value="2"/>
</dbReference>
<dbReference type="PROSITE" id="PS51831">
    <property type="entry name" value="HD"/>
    <property type="match status" value="1"/>
</dbReference>
<keyword id="KW-0378">Hydrolase</keyword>
<keyword id="KW-0460">Magnesium</keyword>
<keyword id="KW-0511">Multifunctional enzyme</keyword>
<keyword id="KW-0548">Nucleotidyltransferase</keyword>
<keyword id="KW-1185">Reference proteome</keyword>
<keyword id="KW-0677">Repeat</keyword>
<keyword id="KW-0808">Transferase</keyword>
<proteinExistence type="inferred from homology"/>
<name>GLND_ECO24</name>
<evidence type="ECO:0000255" key="1">
    <source>
        <dbReference type="HAMAP-Rule" id="MF_00277"/>
    </source>
</evidence>
<evidence type="ECO:0000255" key="2">
    <source>
        <dbReference type="PROSITE-ProRule" id="PRU01175"/>
    </source>
</evidence>
<comment type="function">
    <text evidence="1">Modifies, by uridylylation and deuridylylation, the PII regulatory proteins (GlnB and homologs), in response to the nitrogen status of the cell that GlnD senses through the glutamine level. Under low glutamine levels, catalyzes the conversion of the PII proteins and UTP to PII-UMP and PPi, while under higher glutamine levels, GlnD hydrolyzes PII-UMP to PII and UMP (deuridylylation). Thus, controls uridylylation state and activity of the PII proteins, and plays an important role in the regulation of nitrogen assimilation and metabolism.</text>
</comment>
<comment type="catalytic activity">
    <reaction evidence="1">
        <text>[protein-PII]-L-tyrosine + UTP = [protein-PII]-uridylyl-L-tyrosine + diphosphate</text>
        <dbReference type="Rhea" id="RHEA:13673"/>
        <dbReference type="Rhea" id="RHEA-COMP:12147"/>
        <dbReference type="Rhea" id="RHEA-COMP:12148"/>
        <dbReference type="ChEBI" id="CHEBI:33019"/>
        <dbReference type="ChEBI" id="CHEBI:46398"/>
        <dbReference type="ChEBI" id="CHEBI:46858"/>
        <dbReference type="ChEBI" id="CHEBI:90602"/>
        <dbReference type="EC" id="2.7.7.59"/>
    </reaction>
</comment>
<comment type="catalytic activity">
    <reaction evidence="1">
        <text>[protein-PII]-uridylyl-L-tyrosine + H2O = [protein-PII]-L-tyrosine + UMP + H(+)</text>
        <dbReference type="Rhea" id="RHEA:48600"/>
        <dbReference type="Rhea" id="RHEA-COMP:12147"/>
        <dbReference type="Rhea" id="RHEA-COMP:12148"/>
        <dbReference type="ChEBI" id="CHEBI:15377"/>
        <dbReference type="ChEBI" id="CHEBI:15378"/>
        <dbReference type="ChEBI" id="CHEBI:46858"/>
        <dbReference type="ChEBI" id="CHEBI:57865"/>
        <dbReference type="ChEBI" id="CHEBI:90602"/>
    </reaction>
</comment>
<comment type="cofactor">
    <cofactor evidence="1">
        <name>Mg(2+)</name>
        <dbReference type="ChEBI" id="CHEBI:18420"/>
    </cofactor>
</comment>
<comment type="activity regulation">
    <text evidence="1">Uridylyltransferase (UTase) activity is inhibited by glutamine, while glutamine activates uridylyl-removing (UR) activity.</text>
</comment>
<comment type="domain">
    <text evidence="1">Has four distinct domains: an N-terminal nucleotidyltransferase (NT) domain responsible for UTase activity, a central HD domain that encodes UR activity, and two C-terminal ACT domains that seem to have a role in glutamine sensing.</text>
</comment>
<comment type="similarity">
    <text evidence="1">Belongs to the GlnD family.</text>
</comment>
<organism>
    <name type="scientific">Escherichia coli O139:H28 (strain E24377A / ETEC)</name>
    <dbReference type="NCBI Taxonomy" id="331111"/>
    <lineage>
        <taxon>Bacteria</taxon>
        <taxon>Pseudomonadati</taxon>
        <taxon>Pseudomonadota</taxon>
        <taxon>Gammaproteobacteria</taxon>
        <taxon>Enterobacterales</taxon>
        <taxon>Enterobacteriaceae</taxon>
        <taxon>Escherichia</taxon>
    </lineage>
</organism>
<gene>
    <name evidence="1" type="primary">glnD</name>
    <name type="ordered locus">EcE24377A_0170</name>
</gene>